<protein>
    <recommendedName>
        <fullName evidence="2">Large ribosomal subunit protein uL18</fullName>
    </recommendedName>
    <alternativeName>
        <fullName>60S ribosomal protein L5</fullName>
    </alternativeName>
    <alternativeName>
        <fullName>CPR4</fullName>
    </alternativeName>
</protein>
<name>RL5_NEUCR</name>
<comment type="function">
    <text evidence="4">Component of the ribosome, a large ribonucleoprotein complex responsible for the synthesis of proteins in the cell. The small ribosomal subunit (SSU) binds messenger RNAs (mRNAs) and translates the encoded message by selecting cognate aminoacyl-transfer RNA (tRNA) molecules. The large subunit (LSU) contains the ribosomal catalytic site termed the peptidyl transferase center (PTC), which catalyzes the formation of peptide bonds, thereby polymerizing the amino acids delivered by tRNAs into a polypeptide chain. The nascent polypeptides leave the ribosome through a tunnel in the LSU and interact with protein factors that function in enzymatic processing, targeting, and the membrane insertion of nascent chains at the exit of the ribosomal tunnel.</text>
</comment>
<comment type="subunit">
    <text evidence="1">Component of the large ribosomal subunit (LSU). Mature N.crassa ribosomes consist of a small (40S) and a large (60S) subunit. The 40S small subunit contains 1 molecule of ribosomal RNA (18S rRNA) and at least 32 different proteins. The large 60S subunit contains 3 rRNA molecules (26S, 5.8S and 5S rRNA) and at least 42 different proteins.</text>
</comment>
<comment type="subcellular location">
    <subcellularLocation>
        <location evidence="1">Cytoplasm</location>
    </subcellularLocation>
</comment>
<comment type="similarity">
    <text evidence="3">Belongs to the universal ribosomal protein uL18 family.</text>
</comment>
<gene>
    <name type="primary">rpl-5</name>
    <name type="synonym">crp-4</name>
    <name type="ORF">B7H23.350</name>
    <name type="ORF">NCU04331</name>
</gene>
<dbReference type="EMBL" id="AF054907">
    <property type="protein sequence ID" value="AAC09000.1"/>
    <property type="molecule type" value="Genomic_DNA"/>
</dbReference>
<dbReference type="EMBL" id="BX294026">
    <property type="protein sequence ID" value="CAD71058.1"/>
    <property type="molecule type" value="Genomic_DNA"/>
</dbReference>
<dbReference type="EMBL" id="CM002240">
    <property type="protein sequence ID" value="EAA31342.1"/>
    <property type="molecule type" value="Genomic_DNA"/>
</dbReference>
<dbReference type="RefSeq" id="XP_960578.1">
    <property type="nucleotide sequence ID" value="XM_955485.3"/>
</dbReference>
<dbReference type="PDB" id="7R81">
    <property type="method" value="EM"/>
    <property type="resolution" value="2.70 A"/>
    <property type="chains" value="G1=1-301"/>
</dbReference>
<dbReference type="PDBsum" id="7R81"/>
<dbReference type="EMDB" id="EMD-24307"/>
<dbReference type="SMR" id="O59953"/>
<dbReference type="FunCoup" id="O59953">
    <property type="interactions" value="1173"/>
</dbReference>
<dbReference type="STRING" id="367110.O59953"/>
<dbReference type="PaxDb" id="5141-EFNCRP00000003924"/>
<dbReference type="EnsemblFungi" id="EAA31342">
    <property type="protein sequence ID" value="EAA31342"/>
    <property type="gene ID" value="NCU04331"/>
</dbReference>
<dbReference type="GeneID" id="3876725"/>
<dbReference type="KEGG" id="ncr:NCU04331"/>
<dbReference type="VEuPathDB" id="FungiDB:NCU04331"/>
<dbReference type="HOGENOM" id="CLU_056222_1_0_1"/>
<dbReference type="InParanoid" id="O59953"/>
<dbReference type="OMA" id="CQIASAH"/>
<dbReference type="OrthoDB" id="1618453at2759"/>
<dbReference type="Proteomes" id="UP000001805">
    <property type="component" value="Chromosome 2, Linkage Group V"/>
</dbReference>
<dbReference type="GO" id="GO:0022625">
    <property type="term" value="C:cytosolic large ribosomal subunit"/>
    <property type="evidence" value="ECO:0000318"/>
    <property type="project" value="GO_Central"/>
</dbReference>
<dbReference type="GO" id="GO:0008097">
    <property type="term" value="F:5S rRNA binding"/>
    <property type="evidence" value="ECO:0000318"/>
    <property type="project" value="GO_Central"/>
</dbReference>
<dbReference type="GO" id="GO:0003735">
    <property type="term" value="F:structural constituent of ribosome"/>
    <property type="evidence" value="ECO:0000318"/>
    <property type="project" value="GO_Central"/>
</dbReference>
<dbReference type="GO" id="GO:0000027">
    <property type="term" value="P:ribosomal large subunit assembly"/>
    <property type="evidence" value="ECO:0000318"/>
    <property type="project" value="GO_Central"/>
</dbReference>
<dbReference type="GO" id="GO:0006412">
    <property type="term" value="P:translation"/>
    <property type="evidence" value="ECO:0007669"/>
    <property type="project" value="InterPro"/>
</dbReference>
<dbReference type="CDD" id="cd00432">
    <property type="entry name" value="Ribosomal_L18_L5e"/>
    <property type="match status" value="1"/>
</dbReference>
<dbReference type="FunFam" id="3.30.420.100:FF:000002">
    <property type="entry name" value="60S ribosomal protein L5"/>
    <property type="match status" value="1"/>
</dbReference>
<dbReference type="Gene3D" id="3.30.420.100">
    <property type="match status" value="1"/>
</dbReference>
<dbReference type="HAMAP" id="MF_01337_A">
    <property type="entry name" value="Ribosomal_uL18_A"/>
    <property type="match status" value="1"/>
</dbReference>
<dbReference type="InterPro" id="IPR005485">
    <property type="entry name" value="Rbsml_uL18_euk"/>
</dbReference>
<dbReference type="InterPro" id="IPR025607">
    <property type="entry name" value="Ribosomal_uL18_C_euk"/>
</dbReference>
<dbReference type="PANTHER" id="PTHR23410:SF12">
    <property type="entry name" value="LARGE RIBOSOMAL SUBUNIT PROTEIN UL18"/>
    <property type="match status" value="1"/>
</dbReference>
<dbReference type="PANTHER" id="PTHR23410">
    <property type="entry name" value="RIBOSOMAL PROTEIN L5-RELATED"/>
    <property type="match status" value="1"/>
</dbReference>
<dbReference type="Pfam" id="PF14204">
    <property type="entry name" value="Ribosomal_L18_c"/>
    <property type="match status" value="1"/>
</dbReference>
<dbReference type="Pfam" id="PF17144">
    <property type="entry name" value="Ribosomal_L5e"/>
    <property type="match status" value="1"/>
</dbReference>
<dbReference type="PRINTS" id="PR00058">
    <property type="entry name" value="RIBOSOMALL5"/>
</dbReference>
<dbReference type="SUPFAM" id="SSF53137">
    <property type="entry name" value="Translational machinery components"/>
    <property type="match status" value="1"/>
</dbReference>
<keyword id="KW-0002">3D-structure</keyword>
<keyword id="KW-0963">Cytoplasm</keyword>
<keyword id="KW-1185">Reference proteome</keyword>
<keyword id="KW-0687">Ribonucleoprotein</keyword>
<keyword id="KW-0689">Ribosomal protein</keyword>
<keyword id="KW-0694">RNA-binding</keyword>
<keyword id="KW-0699">rRNA-binding</keyword>
<evidence type="ECO:0000269" key="1">
    <source>
    </source>
</evidence>
<evidence type="ECO:0000303" key="2">
    <source>
    </source>
</evidence>
<evidence type="ECO:0000305" key="3"/>
<evidence type="ECO:0000305" key="4">
    <source>
    </source>
</evidence>
<evidence type="ECO:0007744" key="5">
    <source>
        <dbReference type="PDB" id="7R81"/>
    </source>
</evidence>
<proteinExistence type="evidence at protein level"/>
<feature type="chain" id="PRO_0000131451" description="Large ribosomal subunit protein uL18">
    <location>
        <begin position="1"/>
        <end position="301"/>
    </location>
</feature>
<reference key="1">
    <citation type="submission" date="1998-03" db="EMBL/GenBank/DDBJ databases">
        <title>Non-coordinate regulation of 5S rRNA genes and the gene encoding the 5S rRNA-binding riboosomal protein homolog in Neurospora crassa.</title>
        <authorList>
            <person name="de la Serna I.L."/>
            <person name="Cujec T.P."/>
            <person name="Shi Y."/>
            <person name="Tyler B.M."/>
        </authorList>
    </citation>
    <scope>NUCLEOTIDE SEQUENCE [GENOMIC DNA]</scope>
    <source>
        <strain>ATCC 24698 / 74-OR23-1A / CBS 708.71 / DSM 1257 / FGSC 987</strain>
    </source>
</reference>
<reference key="2">
    <citation type="journal article" date="2003" name="Nucleic Acids Res.">
        <title>What's in the genome of a filamentous fungus? Analysis of the Neurospora genome sequence.</title>
        <authorList>
            <person name="Mannhaupt G."/>
            <person name="Montrone C."/>
            <person name="Haase D."/>
            <person name="Mewes H.-W."/>
            <person name="Aign V."/>
            <person name="Hoheisel J.D."/>
            <person name="Fartmann B."/>
            <person name="Nyakatura G."/>
            <person name="Kempken F."/>
            <person name="Maier J."/>
            <person name="Schulte U."/>
        </authorList>
    </citation>
    <scope>NUCLEOTIDE SEQUENCE [LARGE SCALE GENOMIC DNA]</scope>
    <source>
        <strain>ATCC 24698 / 74-OR23-1A / CBS 708.71 / DSM 1257 / FGSC 987</strain>
    </source>
</reference>
<reference key="3">
    <citation type="journal article" date="2003" name="Nature">
        <title>The genome sequence of the filamentous fungus Neurospora crassa.</title>
        <authorList>
            <person name="Galagan J.E."/>
            <person name="Calvo S.E."/>
            <person name="Borkovich K.A."/>
            <person name="Selker E.U."/>
            <person name="Read N.D."/>
            <person name="Jaffe D.B."/>
            <person name="FitzHugh W."/>
            <person name="Ma L.-J."/>
            <person name="Smirnov S."/>
            <person name="Purcell S."/>
            <person name="Rehman B."/>
            <person name="Elkins T."/>
            <person name="Engels R."/>
            <person name="Wang S."/>
            <person name="Nielsen C.B."/>
            <person name="Butler J."/>
            <person name="Endrizzi M."/>
            <person name="Qui D."/>
            <person name="Ianakiev P."/>
            <person name="Bell-Pedersen D."/>
            <person name="Nelson M.A."/>
            <person name="Werner-Washburne M."/>
            <person name="Selitrennikoff C.P."/>
            <person name="Kinsey J.A."/>
            <person name="Braun E.L."/>
            <person name="Zelter A."/>
            <person name="Schulte U."/>
            <person name="Kothe G.O."/>
            <person name="Jedd G."/>
            <person name="Mewes H.-W."/>
            <person name="Staben C."/>
            <person name="Marcotte E."/>
            <person name="Greenberg D."/>
            <person name="Roy A."/>
            <person name="Foley K."/>
            <person name="Naylor J."/>
            <person name="Stange-Thomann N."/>
            <person name="Barrett R."/>
            <person name="Gnerre S."/>
            <person name="Kamal M."/>
            <person name="Kamvysselis M."/>
            <person name="Mauceli E.W."/>
            <person name="Bielke C."/>
            <person name="Rudd S."/>
            <person name="Frishman D."/>
            <person name="Krystofova S."/>
            <person name="Rasmussen C."/>
            <person name="Metzenberg R.L."/>
            <person name="Perkins D.D."/>
            <person name="Kroken S."/>
            <person name="Cogoni C."/>
            <person name="Macino G."/>
            <person name="Catcheside D.E.A."/>
            <person name="Li W."/>
            <person name="Pratt R.J."/>
            <person name="Osmani S.A."/>
            <person name="DeSouza C.P.C."/>
            <person name="Glass N.L."/>
            <person name="Orbach M.J."/>
            <person name="Berglund J.A."/>
            <person name="Voelker R."/>
            <person name="Yarden O."/>
            <person name="Plamann M."/>
            <person name="Seiler S."/>
            <person name="Dunlap J.C."/>
            <person name="Radford A."/>
            <person name="Aramayo R."/>
            <person name="Natvig D.O."/>
            <person name="Alex L.A."/>
            <person name="Mannhaupt G."/>
            <person name="Ebbole D.J."/>
            <person name="Freitag M."/>
            <person name="Paulsen I."/>
            <person name="Sachs M.S."/>
            <person name="Lander E.S."/>
            <person name="Nusbaum C."/>
            <person name="Birren B.W."/>
        </authorList>
    </citation>
    <scope>NUCLEOTIDE SEQUENCE [LARGE SCALE GENOMIC DNA]</scope>
    <source>
        <strain>ATCC 24698 / 74-OR23-1A / CBS 708.71 / DSM 1257 / FGSC 987</strain>
    </source>
</reference>
<reference evidence="5" key="4">
    <citation type="journal article" date="2021" name="Proc. Natl. Acad. Sci. U.S.A.">
        <title>Structure of the translating Neurospora ribosome arrested by cycloheximide.</title>
        <authorList>
            <person name="Shen L."/>
            <person name="Su Z."/>
            <person name="Yang K."/>
            <person name="Wu C."/>
            <person name="Becker T."/>
            <person name="Bell-Pedersen D."/>
            <person name="Zhang J."/>
            <person name="Sachs M.S."/>
        </authorList>
    </citation>
    <scope>STRUCTURE BY ELECTRON MICROSCOPY (2.70 ANGSTROMS)</scope>
</reference>
<sequence length="301" mass="34412">MAFHKLVKNSAYYSRFQTKYKRRREGKTDYYARKRLITQAKNKYNAPKYRLVVRFTNRDIILQIVSSEITGDKVFASAYSHELKAYGIEHGLTNWAAAYATGLLLARRVLKKLGLDETFKGVEEADGEYKLTEAAETDDGERRPFKAFLDVGLARTSTGARVFGAMKGASDGGIFIPHSENRFPGYDMESEELDAETLKKYIFGGHVAEYMETLADDDEERYKSQFNRYIEDDLEADGLEDLYAEAHAAIREDPFKKAESEAPKKTKEEWKAESLKYKKSKLTREQRAAGVQERIAALRSE</sequence>
<accession>O59953</accession>
<accession>Q7RVB8</accession>
<organism>
    <name type="scientific">Neurospora crassa (strain ATCC 24698 / 74-OR23-1A / CBS 708.71 / DSM 1257 / FGSC 987)</name>
    <dbReference type="NCBI Taxonomy" id="367110"/>
    <lineage>
        <taxon>Eukaryota</taxon>
        <taxon>Fungi</taxon>
        <taxon>Dikarya</taxon>
        <taxon>Ascomycota</taxon>
        <taxon>Pezizomycotina</taxon>
        <taxon>Sordariomycetes</taxon>
        <taxon>Sordariomycetidae</taxon>
        <taxon>Sordariales</taxon>
        <taxon>Sordariaceae</taxon>
        <taxon>Neurospora</taxon>
    </lineage>
</organism>